<feature type="signal peptide" evidence="3">
    <location>
        <begin position="1"/>
        <end position="23"/>
    </location>
</feature>
<feature type="chain" id="PRO_0000023459" description="Trefoil factor 2">
    <location>
        <begin position="24"/>
        <end position="129"/>
    </location>
</feature>
<feature type="domain" description="P-type 1" evidence="4">
    <location>
        <begin position="29"/>
        <end position="73"/>
    </location>
</feature>
<feature type="domain" description="P-type 2" evidence="4">
    <location>
        <begin position="79"/>
        <end position="122"/>
    </location>
</feature>
<feature type="modified residue" description="Pyrrolidone carboxylic acid" evidence="2">
    <location>
        <position position="24"/>
    </location>
</feature>
<feature type="disulfide bond" evidence="4">
    <location>
        <begin position="29"/>
        <end position="127"/>
    </location>
</feature>
<feature type="disulfide bond" evidence="4">
    <location>
        <begin position="31"/>
        <end position="58"/>
    </location>
</feature>
<feature type="disulfide bond" evidence="4">
    <location>
        <begin position="42"/>
        <end position="57"/>
    </location>
</feature>
<feature type="disulfide bond" evidence="4">
    <location>
        <begin position="52"/>
        <end position="69"/>
    </location>
</feature>
<feature type="disulfide bond" evidence="4">
    <location>
        <begin position="81"/>
        <end position="107"/>
    </location>
</feature>
<feature type="disulfide bond" evidence="4">
    <location>
        <begin position="91"/>
        <end position="106"/>
    </location>
</feature>
<feature type="disulfide bond" evidence="4">
    <location>
        <begin position="101"/>
        <end position="118"/>
    </location>
</feature>
<organism>
    <name type="scientific">Canis lupus familiaris</name>
    <name type="common">Dog</name>
    <name type="synonym">Canis familiaris</name>
    <dbReference type="NCBI Taxonomy" id="9615"/>
    <lineage>
        <taxon>Eukaryota</taxon>
        <taxon>Metazoa</taxon>
        <taxon>Chordata</taxon>
        <taxon>Craniata</taxon>
        <taxon>Vertebrata</taxon>
        <taxon>Euteleostomi</taxon>
        <taxon>Mammalia</taxon>
        <taxon>Eutheria</taxon>
        <taxon>Laurasiatheria</taxon>
        <taxon>Carnivora</taxon>
        <taxon>Caniformia</taxon>
        <taxon>Canidae</taxon>
        <taxon>Canis</taxon>
    </lineage>
</organism>
<protein>
    <recommendedName>
        <fullName>Trefoil factor 2</fullName>
    </recommendedName>
</protein>
<keyword id="KW-1015">Disulfide bond</keyword>
<keyword id="KW-0873">Pyrrolidone carboxylic acid</keyword>
<keyword id="KW-1185">Reference proteome</keyword>
<keyword id="KW-0677">Repeat</keyword>
<keyword id="KW-0964">Secreted</keyword>
<keyword id="KW-0732">Signal</keyword>
<gene>
    <name type="primary">TFF2</name>
</gene>
<comment type="function">
    <text evidence="1">Inhibits gastrointestinal motility and gastric acid secretion. Could function as a structural component of gastric mucus, possibly by stabilizing glycoproteins in the mucus gel through interactions with carbohydrate side chains (By similarity).</text>
</comment>
<comment type="subcellular location">
    <subcellularLocation>
        <location evidence="1">Secreted</location>
    </subcellularLocation>
</comment>
<accession>Q863J2</accession>
<name>TFF2_CANLF</name>
<dbReference type="EMBL" id="AY264843">
    <property type="protein sequence ID" value="AAP21820.1"/>
    <property type="molecule type" value="mRNA"/>
</dbReference>
<dbReference type="RefSeq" id="NP_001002991.1">
    <property type="nucleotide sequence ID" value="NM_001002991.1"/>
</dbReference>
<dbReference type="SMR" id="Q863J2"/>
<dbReference type="FunCoup" id="Q863J2">
    <property type="interactions" value="1"/>
</dbReference>
<dbReference type="STRING" id="9615.ENSCAFP00000057618"/>
<dbReference type="PaxDb" id="9612-ENSCAFP00000015215"/>
<dbReference type="GeneID" id="403489"/>
<dbReference type="KEGG" id="cfa:403489"/>
<dbReference type="CTD" id="7032"/>
<dbReference type="eggNOG" id="ENOG502S5ZY">
    <property type="taxonomic scope" value="Eukaryota"/>
</dbReference>
<dbReference type="InParanoid" id="Q863J2"/>
<dbReference type="OrthoDB" id="10051464at2759"/>
<dbReference type="Proteomes" id="UP000002254">
    <property type="component" value="Unplaced"/>
</dbReference>
<dbReference type="Proteomes" id="UP000694429">
    <property type="component" value="Unplaced"/>
</dbReference>
<dbReference type="Proteomes" id="UP000694542">
    <property type="component" value="Unplaced"/>
</dbReference>
<dbReference type="Proteomes" id="UP000805418">
    <property type="component" value="Unplaced"/>
</dbReference>
<dbReference type="GO" id="GO:0005615">
    <property type="term" value="C:extracellular space"/>
    <property type="evidence" value="ECO:0000318"/>
    <property type="project" value="GO_Central"/>
</dbReference>
<dbReference type="GO" id="GO:0031723">
    <property type="term" value="F:CXCR4 chemokine receptor binding"/>
    <property type="evidence" value="ECO:0000318"/>
    <property type="project" value="GO_Central"/>
</dbReference>
<dbReference type="GO" id="GO:0070098">
    <property type="term" value="P:chemokine-mediated signaling pathway"/>
    <property type="evidence" value="ECO:0000318"/>
    <property type="project" value="GO_Central"/>
</dbReference>
<dbReference type="GO" id="GO:0030277">
    <property type="term" value="P:maintenance of gastrointestinal epithelium"/>
    <property type="evidence" value="ECO:0000318"/>
    <property type="project" value="GO_Central"/>
</dbReference>
<dbReference type="GO" id="GO:0060455">
    <property type="term" value="P:negative regulation of gastric acid secretion"/>
    <property type="evidence" value="ECO:0000318"/>
    <property type="project" value="GO_Central"/>
</dbReference>
<dbReference type="CDD" id="cd00111">
    <property type="entry name" value="Trefoil"/>
    <property type="match status" value="2"/>
</dbReference>
<dbReference type="FunFam" id="4.10.110.10:FF:000005">
    <property type="entry name" value="Trefoil factor 2"/>
    <property type="match status" value="1"/>
</dbReference>
<dbReference type="FunFam" id="4.10.110.10:FF:000001">
    <property type="entry name" value="Trefoil factor 3"/>
    <property type="match status" value="1"/>
</dbReference>
<dbReference type="Gene3D" id="4.10.110.10">
    <property type="entry name" value="Spasmolytic Protein, domain 1"/>
    <property type="match status" value="2"/>
</dbReference>
<dbReference type="InterPro" id="IPR017994">
    <property type="entry name" value="P_trefoil_chordata"/>
</dbReference>
<dbReference type="InterPro" id="IPR017957">
    <property type="entry name" value="P_trefoil_CS"/>
</dbReference>
<dbReference type="InterPro" id="IPR000519">
    <property type="entry name" value="P_trefoil_dom"/>
</dbReference>
<dbReference type="InterPro" id="IPR044913">
    <property type="entry name" value="P_trefoil_dom_sf"/>
</dbReference>
<dbReference type="PANTHER" id="PTHR13826">
    <property type="entry name" value="INTESTINAL TREFOIL FACTOR-RELATED"/>
    <property type="match status" value="1"/>
</dbReference>
<dbReference type="PANTHER" id="PTHR13826:SF17">
    <property type="entry name" value="TREFOIL FACTOR 2"/>
    <property type="match status" value="1"/>
</dbReference>
<dbReference type="Pfam" id="PF00088">
    <property type="entry name" value="Trefoil"/>
    <property type="match status" value="2"/>
</dbReference>
<dbReference type="PRINTS" id="PR00680">
    <property type="entry name" value="PTREFOIL"/>
</dbReference>
<dbReference type="SMART" id="SM00018">
    <property type="entry name" value="PD"/>
    <property type="match status" value="2"/>
</dbReference>
<dbReference type="SUPFAM" id="SSF57492">
    <property type="entry name" value="Trefoil"/>
    <property type="match status" value="2"/>
</dbReference>
<dbReference type="PROSITE" id="PS00025">
    <property type="entry name" value="P_TREFOIL_1"/>
    <property type="match status" value="2"/>
</dbReference>
<dbReference type="PROSITE" id="PS51448">
    <property type="entry name" value="P_TREFOIL_2"/>
    <property type="match status" value="2"/>
</dbReference>
<evidence type="ECO:0000250" key="1"/>
<evidence type="ECO:0000250" key="2">
    <source>
        <dbReference type="UniProtKB" id="P01359"/>
    </source>
</evidence>
<evidence type="ECO:0000255" key="3"/>
<evidence type="ECO:0000255" key="4">
    <source>
        <dbReference type="PROSITE-ProRule" id="PRU00779"/>
    </source>
</evidence>
<sequence length="129" mass="14102">MGPRGLQLLAVLLALGLCAPAGAQKPSACQCSRIEASHRKNCGFPGISASECFNTGCCFDSRVPNVPWCFHPLPKQESEQCVMEVAARKNCGYPGISPQECASRNCCFSDTIRNVPWCFFPILNQDCHY</sequence>
<proteinExistence type="evidence at transcript level"/>
<reference key="1">
    <citation type="submission" date="2003-03" db="EMBL/GenBank/DDBJ databases">
        <title>Canine trefoil factor 2 (TFF2) mRNA from gastric mucosa.</title>
        <authorList>
            <person name="Campbell B.G."/>
            <person name="Jabbes M."/>
        </authorList>
    </citation>
    <scope>NUCLEOTIDE SEQUENCE [MRNA]</scope>
    <source>
        <tissue>Gastric mucosa</tissue>
    </source>
</reference>